<keyword id="KW-0066">ATP synthesis</keyword>
<keyword id="KW-1003">Cell membrane</keyword>
<keyword id="KW-0139">CF(1)</keyword>
<keyword id="KW-0375">Hydrogen ion transport</keyword>
<keyword id="KW-0406">Ion transport</keyword>
<keyword id="KW-0472">Membrane</keyword>
<keyword id="KW-0813">Transport</keyword>
<dbReference type="EMBL" id="CP000312">
    <property type="protein sequence ID" value="ABG86117.1"/>
    <property type="molecule type" value="Genomic_DNA"/>
</dbReference>
<dbReference type="RefSeq" id="WP_011592981.1">
    <property type="nucleotide sequence ID" value="NC_008262.1"/>
</dbReference>
<dbReference type="SMR" id="Q0SQZ6"/>
<dbReference type="KEGG" id="cpr:CPR_2161"/>
<dbReference type="Proteomes" id="UP000001824">
    <property type="component" value="Chromosome"/>
</dbReference>
<dbReference type="GO" id="GO:0005886">
    <property type="term" value="C:plasma membrane"/>
    <property type="evidence" value="ECO:0007669"/>
    <property type="project" value="UniProtKB-SubCell"/>
</dbReference>
<dbReference type="GO" id="GO:0045259">
    <property type="term" value="C:proton-transporting ATP synthase complex"/>
    <property type="evidence" value="ECO:0007669"/>
    <property type="project" value="UniProtKB-KW"/>
</dbReference>
<dbReference type="GO" id="GO:0005524">
    <property type="term" value="F:ATP binding"/>
    <property type="evidence" value="ECO:0007669"/>
    <property type="project" value="UniProtKB-UniRule"/>
</dbReference>
<dbReference type="GO" id="GO:0046933">
    <property type="term" value="F:proton-transporting ATP synthase activity, rotational mechanism"/>
    <property type="evidence" value="ECO:0007669"/>
    <property type="project" value="UniProtKB-UniRule"/>
</dbReference>
<dbReference type="CDD" id="cd12152">
    <property type="entry name" value="F1-ATPase_delta"/>
    <property type="match status" value="1"/>
</dbReference>
<dbReference type="FunFam" id="1.20.5.440:FF:000001">
    <property type="entry name" value="ATP synthase epsilon chain"/>
    <property type="match status" value="1"/>
</dbReference>
<dbReference type="Gene3D" id="1.20.5.440">
    <property type="entry name" value="ATP synthase delta/epsilon subunit, C-terminal domain"/>
    <property type="match status" value="1"/>
</dbReference>
<dbReference type="Gene3D" id="2.60.15.10">
    <property type="entry name" value="F0F1 ATP synthase delta/epsilon subunit, N-terminal"/>
    <property type="match status" value="1"/>
</dbReference>
<dbReference type="HAMAP" id="MF_00530">
    <property type="entry name" value="ATP_synth_epsil_bac"/>
    <property type="match status" value="1"/>
</dbReference>
<dbReference type="InterPro" id="IPR036794">
    <property type="entry name" value="ATP_F1_dsu/esu_C_sf"/>
</dbReference>
<dbReference type="InterPro" id="IPR001469">
    <property type="entry name" value="ATP_synth_F1_dsu/esu"/>
</dbReference>
<dbReference type="InterPro" id="IPR020546">
    <property type="entry name" value="ATP_synth_F1_dsu/esu_N"/>
</dbReference>
<dbReference type="InterPro" id="IPR020547">
    <property type="entry name" value="ATP_synth_F1_esu_C"/>
</dbReference>
<dbReference type="InterPro" id="IPR036771">
    <property type="entry name" value="ATPsynth_dsu/esu_N"/>
</dbReference>
<dbReference type="NCBIfam" id="TIGR01216">
    <property type="entry name" value="ATP_synt_epsi"/>
    <property type="match status" value="1"/>
</dbReference>
<dbReference type="NCBIfam" id="NF009984">
    <property type="entry name" value="PRK13450.1"/>
    <property type="match status" value="1"/>
</dbReference>
<dbReference type="PANTHER" id="PTHR13822">
    <property type="entry name" value="ATP SYNTHASE DELTA/EPSILON CHAIN"/>
    <property type="match status" value="1"/>
</dbReference>
<dbReference type="PANTHER" id="PTHR13822:SF10">
    <property type="entry name" value="ATP SYNTHASE EPSILON CHAIN, CHLOROPLASTIC"/>
    <property type="match status" value="1"/>
</dbReference>
<dbReference type="Pfam" id="PF00401">
    <property type="entry name" value="ATP-synt_DE"/>
    <property type="match status" value="1"/>
</dbReference>
<dbReference type="Pfam" id="PF02823">
    <property type="entry name" value="ATP-synt_DE_N"/>
    <property type="match status" value="1"/>
</dbReference>
<dbReference type="SUPFAM" id="SSF46604">
    <property type="entry name" value="Epsilon subunit of F1F0-ATP synthase C-terminal domain"/>
    <property type="match status" value="1"/>
</dbReference>
<dbReference type="SUPFAM" id="SSF51344">
    <property type="entry name" value="Epsilon subunit of F1F0-ATP synthase N-terminal domain"/>
    <property type="match status" value="1"/>
</dbReference>
<feature type="chain" id="PRO_0000265802" description="ATP synthase epsilon chain">
    <location>
        <begin position="1"/>
        <end position="133"/>
    </location>
</feature>
<proteinExistence type="inferred from homology"/>
<gene>
    <name evidence="1" type="primary">atpC</name>
    <name type="ordered locus">CPR_2161</name>
</gene>
<reference key="1">
    <citation type="journal article" date="2006" name="Genome Res.">
        <title>Skewed genomic variability in strains of the toxigenic bacterial pathogen, Clostridium perfringens.</title>
        <authorList>
            <person name="Myers G.S.A."/>
            <person name="Rasko D.A."/>
            <person name="Cheung J.K."/>
            <person name="Ravel J."/>
            <person name="Seshadri R."/>
            <person name="DeBoy R.T."/>
            <person name="Ren Q."/>
            <person name="Varga J."/>
            <person name="Awad M.M."/>
            <person name="Brinkac L.M."/>
            <person name="Daugherty S.C."/>
            <person name="Haft D.H."/>
            <person name="Dodson R.J."/>
            <person name="Madupu R."/>
            <person name="Nelson W.C."/>
            <person name="Rosovitz M.J."/>
            <person name="Sullivan S.A."/>
            <person name="Khouri H."/>
            <person name="Dimitrov G.I."/>
            <person name="Watkins K.L."/>
            <person name="Mulligan S."/>
            <person name="Benton J."/>
            <person name="Radune D."/>
            <person name="Fisher D.J."/>
            <person name="Atkins H.S."/>
            <person name="Hiscox T."/>
            <person name="Jost B.H."/>
            <person name="Billington S.J."/>
            <person name="Songer J.G."/>
            <person name="McClane B.A."/>
            <person name="Titball R.W."/>
            <person name="Rood J.I."/>
            <person name="Melville S.B."/>
            <person name="Paulsen I.T."/>
        </authorList>
    </citation>
    <scope>NUCLEOTIDE SEQUENCE [LARGE SCALE GENOMIC DNA]</scope>
    <source>
        <strain>SM101 / Type A</strain>
    </source>
</reference>
<evidence type="ECO:0000255" key="1">
    <source>
        <dbReference type="HAMAP-Rule" id="MF_00530"/>
    </source>
</evidence>
<comment type="function">
    <text evidence="1">Produces ATP from ADP in the presence of a proton gradient across the membrane.</text>
</comment>
<comment type="subunit">
    <text>F-type ATPases have 2 components, CF(1) - the catalytic core - and CF(0) - the membrane proton channel. CF(1) has five subunits: alpha(3), beta(3), gamma(1), delta(1), epsilon(1). CF(0) has three main subunits: a, b and c.</text>
</comment>
<comment type="subcellular location">
    <subcellularLocation>
        <location evidence="1">Cell membrane</location>
        <topology evidence="1">Peripheral membrane protein</topology>
    </subcellularLocation>
</comment>
<comment type="similarity">
    <text evidence="1">Belongs to the ATPase epsilon chain family.</text>
</comment>
<accession>Q0SQZ6</accession>
<organism>
    <name type="scientific">Clostridium perfringens (strain SM101 / Type A)</name>
    <dbReference type="NCBI Taxonomy" id="289380"/>
    <lineage>
        <taxon>Bacteria</taxon>
        <taxon>Bacillati</taxon>
        <taxon>Bacillota</taxon>
        <taxon>Clostridia</taxon>
        <taxon>Eubacteriales</taxon>
        <taxon>Clostridiaceae</taxon>
        <taxon>Clostridium</taxon>
    </lineage>
</organism>
<sequence length="133" mass="15088">MNKFKLIVTTPERVLISGEVSRVLCKNAVGEFEILAGHQPYLTATVPTVTRIDDENGESKYLFTSTGLMKVQNNEVTFCVNSAEWPEEIDEARAMNAKQRAEERLKNKTDELDKKRAKLALARAMSRLKLKEM</sequence>
<name>ATPE_CLOPS</name>
<protein>
    <recommendedName>
        <fullName evidence="1">ATP synthase epsilon chain</fullName>
    </recommendedName>
    <alternativeName>
        <fullName evidence="1">ATP synthase F1 sector epsilon subunit</fullName>
    </alternativeName>
    <alternativeName>
        <fullName evidence="1">F-ATPase epsilon subunit</fullName>
    </alternativeName>
</protein>